<keyword id="KW-0489">Methyltransferase</keyword>
<keyword id="KW-1185">Reference proteome</keyword>
<keyword id="KW-0949">S-adenosyl-L-methionine</keyword>
<keyword id="KW-0808">Transferase</keyword>
<keyword id="KW-0819">tRNA processing</keyword>
<organism>
    <name type="scientific">Arthrobacter sp. (strain FB24)</name>
    <dbReference type="NCBI Taxonomy" id="290399"/>
    <lineage>
        <taxon>Bacteria</taxon>
        <taxon>Bacillati</taxon>
        <taxon>Actinomycetota</taxon>
        <taxon>Actinomycetes</taxon>
        <taxon>Micrococcales</taxon>
        <taxon>Micrococcaceae</taxon>
        <taxon>Arthrobacter</taxon>
    </lineage>
</organism>
<accession>A0K1I7</accession>
<comment type="function">
    <text evidence="2">Catalyzes the formation of N(7)-methylguanine at position 46 (m7G46) in tRNA.</text>
</comment>
<comment type="catalytic activity">
    <reaction evidence="2">
        <text>guanosine(46) in tRNA + S-adenosyl-L-methionine = N(7)-methylguanosine(46) in tRNA + S-adenosyl-L-homocysteine</text>
        <dbReference type="Rhea" id="RHEA:42708"/>
        <dbReference type="Rhea" id="RHEA-COMP:10188"/>
        <dbReference type="Rhea" id="RHEA-COMP:10189"/>
        <dbReference type="ChEBI" id="CHEBI:57856"/>
        <dbReference type="ChEBI" id="CHEBI:59789"/>
        <dbReference type="ChEBI" id="CHEBI:74269"/>
        <dbReference type="ChEBI" id="CHEBI:74480"/>
        <dbReference type="EC" id="2.1.1.33"/>
    </reaction>
</comment>
<comment type="pathway">
    <text evidence="2">tRNA modification; N(7)-methylguanine-tRNA biosynthesis.</text>
</comment>
<comment type="similarity">
    <text evidence="2">Belongs to the class I-like SAM-binding methyltransferase superfamily. TrmB family.</text>
</comment>
<name>TRMB_ARTS2</name>
<protein>
    <recommendedName>
        <fullName evidence="2">tRNA (guanine-N(7)-)-methyltransferase</fullName>
        <ecNumber evidence="2">2.1.1.33</ecNumber>
    </recommendedName>
    <alternativeName>
        <fullName evidence="2">tRNA (guanine(46)-N(7))-methyltransferase</fullName>
    </alternativeName>
    <alternativeName>
        <fullName evidence="2">tRNA(m7G46)-methyltransferase</fullName>
    </alternativeName>
</protein>
<gene>
    <name evidence="2" type="primary">trmB</name>
    <name type="ordered locus">Arth_3782</name>
</gene>
<proteinExistence type="inferred from homology"/>
<reference key="1">
    <citation type="journal article" date="2013" name="Stand. Genomic Sci.">
        <title>Complete genome sequence of Arthrobacter sp. strain FB24.</title>
        <authorList>
            <person name="Nakatsu C.H."/>
            <person name="Barabote R."/>
            <person name="Thompson S."/>
            <person name="Bruce D."/>
            <person name="Detter C."/>
            <person name="Brettin T."/>
            <person name="Han C."/>
            <person name="Beasley F."/>
            <person name="Chen W."/>
            <person name="Konopka A."/>
            <person name="Xie G."/>
        </authorList>
    </citation>
    <scope>NUCLEOTIDE SEQUENCE [LARGE SCALE GENOMIC DNA]</scope>
    <source>
        <strain>FB24</strain>
    </source>
</reference>
<dbReference type="EC" id="2.1.1.33" evidence="2"/>
<dbReference type="EMBL" id="CP000454">
    <property type="protein sequence ID" value="ABK05157.1"/>
    <property type="molecule type" value="Genomic_DNA"/>
</dbReference>
<dbReference type="RefSeq" id="WP_011693607.1">
    <property type="nucleotide sequence ID" value="NC_008541.1"/>
</dbReference>
<dbReference type="SMR" id="A0K1I7"/>
<dbReference type="STRING" id="290399.Arth_3782"/>
<dbReference type="KEGG" id="art:Arth_3782"/>
<dbReference type="eggNOG" id="COG0220">
    <property type="taxonomic scope" value="Bacteria"/>
</dbReference>
<dbReference type="HOGENOM" id="CLU_050910_0_0_11"/>
<dbReference type="UniPathway" id="UPA00989"/>
<dbReference type="Proteomes" id="UP000000754">
    <property type="component" value="Chromosome"/>
</dbReference>
<dbReference type="GO" id="GO:0043527">
    <property type="term" value="C:tRNA methyltransferase complex"/>
    <property type="evidence" value="ECO:0007669"/>
    <property type="project" value="TreeGrafter"/>
</dbReference>
<dbReference type="GO" id="GO:0008176">
    <property type="term" value="F:tRNA (guanine(46)-N7)-methyltransferase activity"/>
    <property type="evidence" value="ECO:0007669"/>
    <property type="project" value="UniProtKB-UniRule"/>
</dbReference>
<dbReference type="CDD" id="cd02440">
    <property type="entry name" value="AdoMet_MTases"/>
    <property type="match status" value="1"/>
</dbReference>
<dbReference type="Gene3D" id="3.40.50.150">
    <property type="entry name" value="Vaccinia Virus protein VP39"/>
    <property type="match status" value="1"/>
</dbReference>
<dbReference type="HAMAP" id="MF_01057">
    <property type="entry name" value="tRNA_methyltr_TrmB"/>
    <property type="match status" value="1"/>
</dbReference>
<dbReference type="InterPro" id="IPR029063">
    <property type="entry name" value="SAM-dependent_MTases_sf"/>
</dbReference>
<dbReference type="InterPro" id="IPR003358">
    <property type="entry name" value="tRNA_(Gua-N-7)_MeTrfase_Trmb"/>
</dbReference>
<dbReference type="InterPro" id="IPR055361">
    <property type="entry name" value="tRNA_methyltr_TrmB_bact"/>
</dbReference>
<dbReference type="NCBIfam" id="TIGR00091">
    <property type="entry name" value="tRNA (guanosine(46)-N7)-methyltransferase TrmB"/>
    <property type="match status" value="1"/>
</dbReference>
<dbReference type="PANTHER" id="PTHR23417">
    <property type="entry name" value="3-DEOXY-D-MANNO-OCTULOSONIC-ACID TRANSFERASE/TRNA GUANINE-N 7 - -METHYLTRANSFERASE"/>
    <property type="match status" value="1"/>
</dbReference>
<dbReference type="PANTHER" id="PTHR23417:SF14">
    <property type="entry name" value="PENTACOTRIPEPTIDE-REPEAT REGION OF PRORP DOMAIN-CONTAINING PROTEIN"/>
    <property type="match status" value="1"/>
</dbReference>
<dbReference type="Pfam" id="PF02390">
    <property type="entry name" value="Methyltransf_4"/>
    <property type="match status" value="1"/>
</dbReference>
<dbReference type="SUPFAM" id="SSF53335">
    <property type="entry name" value="S-adenosyl-L-methionine-dependent methyltransferases"/>
    <property type="match status" value="1"/>
</dbReference>
<dbReference type="PROSITE" id="PS51625">
    <property type="entry name" value="SAM_MT_TRMB"/>
    <property type="match status" value="1"/>
</dbReference>
<feature type="chain" id="PRO_0000288119" description="tRNA (guanine-N(7)-)-methyltransferase">
    <location>
        <begin position="1"/>
        <end position="319"/>
    </location>
</feature>
<feature type="region of interest" description="Disordered" evidence="3">
    <location>
        <begin position="1"/>
        <end position="44"/>
    </location>
</feature>
<feature type="region of interest" description="Disordered" evidence="3">
    <location>
        <begin position="262"/>
        <end position="288"/>
    </location>
</feature>
<feature type="compositionally biased region" description="Low complexity" evidence="3">
    <location>
        <begin position="14"/>
        <end position="26"/>
    </location>
</feature>
<feature type="active site" evidence="1">
    <location>
        <position position="178"/>
    </location>
</feature>
<feature type="binding site" evidence="2">
    <location>
        <position position="103"/>
    </location>
    <ligand>
        <name>S-adenosyl-L-methionine</name>
        <dbReference type="ChEBI" id="CHEBI:59789"/>
    </ligand>
</feature>
<feature type="binding site" evidence="2">
    <location>
        <position position="128"/>
    </location>
    <ligand>
        <name>S-adenosyl-L-methionine</name>
        <dbReference type="ChEBI" id="CHEBI:59789"/>
    </ligand>
</feature>
<feature type="binding site" evidence="2">
    <location>
        <position position="155"/>
    </location>
    <ligand>
        <name>S-adenosyl-L-methionine</name>
        <dbReference type="ChEBI" id="CHEBI:59789"/>
    </ligand>
</feature>
<feature type="binding site" evidence="2">
    <location>
        <position position="178"/>
    </location>
    <ligand>
        <name>S-adenosyl-L-methionine</name>
        <dbReference type="ChEBI" id="CHEBI:59789"/>
    </ligand>
</feature>
<feature type="binding site" evidence="2">
    <location>
        <position position="182"/>
    </location>
    <ligand>
        <name>substrate</name>
    </ligand>
</feature>
<feature type="binding site" evidence="2">
    <location>
        <position position="214"/>
    </location>
    <ligand>
        <name>substrate</name>
    </ligand>
</feature>
<feature type="binding site" evidence="2">
    <location>
        <begin position="298"/>
        <end position="301"/>
    </location>
    <ligand>
        <name>substrate</name>
    </ligand>
</feature>
<sequence length="319" mass="34907">MSESPETPEPSPAQSPEAAPEQPQAARPVTPGSQASFGTYGGRPVSFVRRGTRLQGRRQQAWEEHSDRWAVDVPRHIANTSVHPDYVFDAEAEFGRSAPLIVEIGSGLGDAVCHAAEENPDWDFLAVEVYTPGLANTVIKINSRKLSNVRVVEANAPEVLATMLPAGSVSEVWVFFPDPWHKSRHHKRRLIQPEFAALVAAALKPGGLFRVATDWSNYAVHVRDVMAGSADFVNLHDGERRGPESPLTQVWQSGVESLVGGAPVKEGRAPVSTEHTGPNEGVDETGGWAPRFEGRIRTSFENKAHEAGRLIFDLCYRRL</sequence>
<evidence type="ECO:0000250" key="1"/>
<evidence type="ECO:0000255" key="2">
    <source>
        <dbReference type="HAMAP-Rule" id="MF_01057"/>
    </source>
</evidence>
<evidence type="ECO:0000256" key="3">
    <source>
        <dbReference type="SAM" id="MobiDB-lite"/>
    </source>
</evidence>